<evidence type="ECO:0000255" key="1">
    <source>
        <dbReference type="HAMAP-Rule" id="MF_01318"/>
    </source>
</evidence>
<evidence type="ECO:0000305" key="2"/>
<feature type="chain" id="PRO_0000230633" description="Large ribosomal subunit protein uL1">
    <location>
        <begin position="1"/>
        <end position="233"/>
    </location>
</feature>
<organism>
    <name type="scientific">Rhodospirillum rubrum (strain ATCC 11170 / ATH 1.1.1 / DSM 467 / LMG 4362 / NCIMB 8255 / S1)</name>
    <dbReference type="NCBI Taxonomy" id="269796"/>
    <lineage>
        <taxon>Bacteria</taxon>
        <taxon>Pseudomonadati</taxon>
        <taxon>Pseudomonadota</taxon>
        <taxon>Alphaproteobacteria</taxon>
        <taxon>Rhodospirillales</taxon>
        <taxon>Rhodospirillaceae</taxon>
        <taxon>Rhodospirillum</taxon>
    </lineage>
</organism>
<sequence length="233" mass="24429">MAKVGKRLKAAHEGIDREAFYDLPQAVHLIRERATAKFDESIEVAMNLGVDPRHADQMVRGVVELPHGTGKTMRVAVFAKGAKAEEAKAAGADLVGADELAADIQNGTIDFDRCIATPDMMGVVGRLGKVLGPRGLMPNPKLGTVTMDVATAVKAAKAGQVQFRVEKSGIVHAGVGRASFTEEKLVDNVRAFVDAINKAKPTGAKGTYLKKVSLSSTMGPGLKVNLGTISGAA</sequence>
<proteinExistence type="inferred from homology"/>
<dbReference type="EMBL" id="CP000230">
    <property type="protein sequence ID" value="ABC23495.1"/>
    <property type="molecule type" value="Genomic_DNA"/>
</dbReference>
<dbReference type="RefSeq" id="WP_011390508.1">
    <property type="nucleotide sequence ID" value="NC_007643.1"/>
</dbReference>
<dbReference type="RefSeq" id="YP_427782.1">
    <property type="nucleotide sequence ID" value="NC_007643.1"/>
</dbReference>
<dbReference type="SMR" id="Q2RQV0"/>
<dbReference type="STRING" id="269796.Rru_A2698"/>
<dbReference type="EnsemblBacteria" id="ABC23495">
    <property type="protein sequence ID" value="ABC23495"/>
    <property type="gene ID" value="Rru_A2698"/>
</dbReference>
<dbReference type="KEGG" id="rru:Rru_A2698"/>
<dbReference type="PATRIC" id="fig|269796.9.peg.2807"/>
<dbReference type="eggNOG" id="COG0081">
    <property type="taxonomic scope" value="Bacteria"/>
</dbReference>
<dbReference type="HOGENOM" id="CLU_062853_0_0_5"/>
<dbReference type="PhylomeDB" id="Q2RQV0"/>
<dbReference type="Proteomes" id="UP000001929">
    <property type="component" value="Chromosome"/>
</dbReference>
<dbReference type="GO" id="GO:0022625">
    <property type="term" value="C:cytosolic large ribosomal subunit"/>
    <property type="evidence" value="ECO:0007669"/>
    <property type="project" value="TreeGrafter"/>
</dbReference>
<dbReference type="GO" id="GO:0019843">
    <property type="term" value="F:rRNA binding"/>
    <property type="evidence" value="ECO:0007669"/>
    <property type="project" value="UniProtKB-UniRule"/>
</dbReference>
<dbReference type="GO" id="GO:0003735">
    <property type="term" value="F:structural constituent of ribosome"/>
    <property type="evidence" value="ECO:0007669"/>
    <property type="project" value="InterPro"/>
</dbReference>
<dbReference type="GO" id="GO:0000049">
    <property type="term" value="F:tRNA binding"/>
    <property type="evidence" value="ECO:0007669"/>
    <property type="project" value="UniProtKB-KW"/>
</dbReference>
<dbReference type="GO" id="GO:0006417">
    <property type="term" value="P:regulation of translation"/>
    <property type="evidence" value="ECO:0007669"/>
    <property type="project" value="UniProtKB-KW"/>
</dbReference>
<dbReference type="GO" id="GO:0006412">
    <property type="term" value="P:translation"/>
    <property type="evidence" value="ECO:0007669"/>
    <property type="project" value="UniProtKB-UniRule"/>
</dbReference>
<dbReference type="CDD" id="cd00403">
    <property type="entry name" value="Ribosomal_L1"/>
    <property type="match status" value="1"/>
</dbReference>
<dbReference type="FunFam" id="3.40.50.790:FF:000001">
    <property type="entry name" value="50S ribosomal protein L1"/>
    <property type="match status" value="1"/>
</dbReference>
<dbReference type="Gene3D" id="3.30.190.20">
    <property type="match status" value="1"/>
</dbReference>
<dbReference type="Gene3D" id="3.40.50.790">
    <property type="match status" value="1"/>
</dbReference>
<dbReference type="HAMAP" id="MF_01318_B">
    <property type="entry name" value="Ribosomal_uL1_B"/>
    <property type="match status" value="1"/>
</dbReference>
<dbReference type="InterPro" id="IPR005878">
    <property type="entry name" value="Ribosom_uL1_bac-type"/>
</dbReference>
<dbReference type="InterPro" id="IPR002143">
    <property type="entry name" value="Ribosomal_uL1"/>
</dbReference>
<dbReference type="InterPro" id="IPR023674">
    <property type="entry name" value="Ribosomal_uL1-like"/>
</dbReference>
<dbReference type="InterPro" id="IPR028364">
    <property type="entry name" value="Ribosomal_uL1/biogenesis"/>
</dbReference>
<dbReference type="InterPro" id="IPR016095">
    <property type="entry name" value="Ribosomal_uL1_3-a/b-sand"/>
</dbReference>
<dbReference type="InterPro" id="IPR023673">
    <property type="entry name" value="Ribosomal_uL1_CS"/>
</dbReference>
<dbReference type="NCBIfam" id="TIGR01169">
    <property type="entry name" value="rplA_bact"/>
    <property type="match status" value="1"/>
</dbReference>
<dbReference type="PANTHER" id="PTHR36427">
    <property type="entry name" value="54S RIBOSOMAL PROTEIN L1, MITOCHONDRIAL"/>
    <property type="match status" value="1"/>
</dbReference>
<dbReference type="PANTHER" id="PTHR36427:SF3">
    <property type="entry name" value="LARGE RIBOSOMAL SUBUNIT PROTEIN UL1M"/>
    <property type="match status" value="1"/>
</dbReference>
<dbReference type="Pfam" id="PF00687">
    <property type="entry name" value="Ribosomal_L1"/>
    <property type="match status" value="1"/>
</dbReference>
<dbReference type="PIRSF" id="PIRSF002155">
    <property type="entry name" value="Ribosomal_L1"/>
    <property type="match status" value="1"/>
</dbReference>
<dbReference type="SUPFAM" id="SSF56808">
    <property type="entry name" value="Ribosomal protein L1"/>
    <property type="match status" value="1"/>
</dbReference>
<dbReference type="PROSITE" id="PS01199">
    <property type="entry name" value="RIBOSOMAL_L1"/>
    <property type="match status" value="1"/>
</dbReference>
<comment type="function">
    <text evidence="1">Binds directly to 23S rRNA. The L1 stalk is quite mobile in the ribosome, and is involved in E site tRNA release.</text>
</comment>
<comment type="function">
    <text evidence="1">Protein L1 is also a translational repressor protein, it controls the translation of the L11 operon by binding to its mRNA.</text>
</comment>
<comment type="subunit">
    <text evidence="1">Part of the 50S ribosomal subunit.</text>
</comment>
<comment type="similarity">
    <text evidence="1">Belongs to the universal ribosomal protein uL1 family.</text>
</comment>
<protein>
    <recommendedName>
        <fullName evidence="1">Large ribosomal subunit protein uL1</fullName>
    </recommendedName>
    <alternativeName>
        <fullName evidence="2">50S ribosomal protein L1</fullName>
    </alternativeName>
</protein>
<keyword id="KW-1185">Reference proteome</keyword>
<keyword id="KW-0678">Repressor</keyword>
<keyword id="KW-0687">Ribonucleoprotein</keyword>
<keyword id="KW-0689">Ribosomal protein</keyword>
<keyword id="KW-0694">RNA-binding</keyword>
<keyword id="KW-0699">rRNA-binding</keyword>
<keyword id="KW-0810">Translation regulation</keyword>
<keyword id="KW-0820">tRNA-binding</keyword>
<gene>
    <name evidence="1" type="primary">rplA</name>
    <name type="ordered locus">Rru_A2698</name>
</gene>
<reference key="1">
    <citation type="journal article" date="2011" name="Stand. Genomic Sci.">
        <title>Complete genome sequence of Rhodospirillum rubrum type strain (S1).</title>
        <authorList>
            <person name="Munk A.C."/>
            <person name="Copeland A."/>
            <person name="Lucas S."/>
            <person name="Lapidus A."/>
            <person name="Del Rio T.G."/>
            <person name="Barry K."/>
            <person name="Detter J.C."/>
            <person name="Hammon N."/>
            <person name="Israni S."/>
            <person name="Pitluck S."/>
            <person name="Brettin T."/>
            <person name="Bruce D."/>
            <person name="Han C."/>
            <person name="Tapia R."/>
            <person name="Gilna P."/>
            <person name="Schmutz J."/>
            <person name="Larimer F."/>
            <person name="Land M."/>
            <person name="Kyrpides N.C."/>
            <person name="Mavromatis K."/>
            <person name="Richardson P."/>
            <person name="Rohde M."/>
            <person name="Goeker M."/>
            <person name="Klenk H.P."/>
            <person name="Zhang Y."/>
            <person name="Roberts G.P."/>
            <person name="Reslewic S."/>
            <person name="Schwartz D.C."/>
        </authorList>
    </citation>
    <scope>NUCLEOTIDE SEQUENCE [LARGE SCALE GENOMIC DNA]</scope>
    <source>
        <strain>ATCC 11170 / ATH 1.1.1 / DSM 467 / LMG 4362 / NCIMB 8255 / S1</strain>
    </source>
</reference>
<accession>Q2RQV0</accession>
<name>RL1_RHORT</name>